<accession>B1VV57</accession>
<comment type="function">
    <text evidence="1">Catalyzes the transfer of a methyl group from 5-methyltetrahydrofolate to homocysteine resulting in methionine formation.</text>
</comment>
<comment type="catalytic activity">
    <reaction evidence="1">
        <text>5-methyltetrahydropteroyltri-L-glutamate + L-homocysteine = tetrahydropteroyltri-L-glutamate + L-methionine</text>
        <dbReference type="Rhea" id="RHEA:21196"/>
        <dbReference type="ChEBI" id="CHEBI:57844"/>
        <dbReference type="ChEBI" id="CHEBI:58140"/>
        <dbReference type="ChEBI" id="CHEBI:58199"/>
        <dbReference type="ChEBI" id="CHEBI:58207"/>
        <dbReference type="EC" id="2.1.1.14"/>
    </reaction>
</comment>
<comment type="cofactor">
    <cofactor evidence="1">
        <name>Zn(2+)</name>
        <dbReference type="ChEBI" id="CHEBI:29105"/>
    </cofactor>
    <text evidence="1">Binds 1 zinc ion per subunit.</text>
</comment>
<comment type="pathway">
    <text evidence="1">Amino-acid biosynthesis; L-methionine biosynthesis via de novo pathway; L-methionine from L-homocysteine (MetE route): step 1/1.</text>
</comment>
<comment type="similarity">
    <text evidence="1">Belongs to the vitamin-B12 independent methionine synthase family.</text>
</comment>
<feature type="chain" id="PRO_1000097846" description="5-methyltetrahydropteroyltriglutamate--homocysteine methyltransferase">
    <location>
        <begin position="1"/>
        <end position="774"/>
    </location>
</feature>
<feature type="active site" description="Proton donor" evidence="1">
    <location>
        <position position="709"/>
    </location>
</feature>
<feature type="binding site" evidence="1">
    <location>
        <begin position="24"/>
        <end position="27"/>
    </location>
    <ligand>
        <name>5-methyltetrahydropteroyltri-L-glutamate</name>
        <dbReference type="ChEBI" id="CHEBI:58207"/>
    </ligand>
</feature>
<feature type="binding site" evidence="1">
    <location>
        <position position="120"/>
    </location>
    <ligand>
        <name>5-methyltetrahydropteroyltri-L-glutamate</name>
        <dbReference type="ChEBI" id="CHEBI:58207"/>
    </ligand>
</feature>
<feature type="binding site" evidence="1">
    <location>
        <begin position="446"/>
        <end position="448"/>
    </location>
    <ligand>
        <name>L-homocysteine</name>
        <dbReference type="ChEBI" id="CHEBI:58199"/>
    </ligand>
</feature>
<feature type="binding site" evidence="1">
    <location>
        <begin position="446"/>
        <end position="448"/>
    </location>
    <ligand>
        <name>L-methionine</name>
        <dbReference type="ChEBI" id="CHEBI:57844"/>
    </ligand>
</feature>
<feature type="binding site" evidence="1">
    <location>
        <position position="499"/>
    </location>
    <ligand>
        <name>L-homocysteine</name>
        <dbReference type="ChEBI" id="CHEBI:58199"/>
    </ligand>
</feature>
<feature type="binding site" evidence="1">
    <location>
        <position position="499"/>
    </location>
    <ligand>
        <name>L-methionine</name>
        <dbReference type="ChEBI" id="CHEBI:57844"/>
    </ligand>
</feature>
<feature type="binding site" evidence="1">
    <location>
        <position position="576"/>
    </location>
    <ligand>
        <name>5-methyltetrahydropteroyltri-L-glutamate</name>
        <dbReference type="ChEBI" id="CHEBI:58207"/>
    </ligand>
</feature>
<feature type="binding site" evidence="1">
    <location>
        <position position="614"/>
    </location>
    <ligand>
        <name>L-homocysteine</name>
        <dbReference type="ChEBI" id="CHEBI:58199"/>
    </ligand>
</feature>
<feature type="binding site" evidence="1">
    <location>
        <position position="614"/>
    </location>
    <ligand>
        <name>L-methionine</name>
        <dbReference type="ChEBI" id="CHEBI:57844"/>
    </ligand>
</feature>
<feature type="binding site" evidence="1">
    <location>
        <position position="620"/>
    </location>
    <ligand>
        <name>5-methyltetrahydropteroyltri-L-glutamate</name>
        <dbReference type="ChEBI" id="CHEBI:58207"/>
    </ligand>
</feature>
<feature type="binding site" evidence="1">
    <location>
        <position position="656"/>
    </location>
    <ligand>
        <name>Zn(2+)</name>
        <dbReference type="ChEBI" id="CHEBI:29105"/>
        <note>catalytic</note>
    </ligand>
</feature>
<feature type="binding site" evidence="1">
    <location>
        <position position="658"/>
    </location>
    <ligand>
        <name>Zn(2+)</name>
        <dbReference type="ChEBI" id="CHEBI:29105"/>
        <note>catalytic</note>
    </ligand>
</feature>
<feature type="binding site" evidence="1">
    <location>
        <position position="680"/>
    </location>
    <ligand>
        <name>Zn(2+)</name>
        <dbReference type="ChEBI" id="CHEBI:29105"/>
        <note>catalytic</note>
    </ligand>
</feature>
<feature type="binding site" evidence="1">
    <location>
        <position position="741"/>
    </location>
    <ligand>
        <name>Zn(2+)</name>
        <dbReference type="ChEBI" id="CHEBI:29105"/>
        <note>catalytic</note>
    </ligand>
</feature>
<proteinExistence type="inferred from homology"/>
<organism>
    <name type="scientific">Streptomyces griseus subsp. griseus (strain JCM 4626 / CBS 651.72 / NBRC 13350 / KCC S-0626 / ISP 5235)</name>
    <dbReference type="NCBI Taxonomy" id="455632"/>
    <lineage>
        <taxon>Bacteria</taxon>
        <taxon>Bacillati</taxon>
        <taxon>Actinomycetota</taxon>
        <taxon>Actinomycetes</taxon>
        <taxon>Kitasatosporales</taxon>
        <taxon>Streptomycetaceae</taxon>
        <taxon>Streptomyces</taxon>
    </lineage>
</organism>
<keyword id="KW-0028">Amino-acid biosynthesis</keyword>
<keyword id="KW-0479">Metal-binding</keyword>
<keyword id="KW-0486">Methionine biosynthesis</keyword>
<keyword id="KW-0489">Methyltransferase</keyword>
<keyword id="KW-0677">Repeat</keyword>
<keyword id="KW-0808">Transferase</keyword>
<keyword id="KW-0862">Zinc</keyword>
<name>METE_STRGG</name>
<evidence type="ECO:0000255" key="1">
    <source>
        <dbReference type="HAMAP-Rule" id="MF_00172"/>
    </source>
</evidence>
<reference key="1">
    <citation type="journal article" date="2008" name="J. Bacteriol.">
        <title>Genome sequence of the streptomycin-producing microorganism Streptomyces griseus IFO 13350.</title>
        <authorList>
            <person name="Ohnishi Y."/>
            <person name="Ishikawa J."/>
            <person name="Hara H."/>
            <person name="Suzuki H."/>
            <person name="Ikenoya M."/>
            <person name="Ikeda H."/>
            <person name="Yamashita A."/>
            <person name="Hattori M."/>
            <person name="Horinouchi S."/>
        </authorList>
    </citation>
    <scope>NUCLEOTIDE SEQUENCE [LARGE SCALE GENOMIC DNA]</scope>
    <source>
        <strain>JCM 4626 / CBS 651.72 / NBRC 13350 / KCC S-0626 / ISP 5235</strain>
    </source>
</reference>
<dbReference type="EC" id="2.1.1.14" evidence="1"/>
<dbReference type="EMBL" id="AP009493">
    <property type="protein sequence ID" value="BAG18041.1"/>
    <property type="molecule type" value="Genomic_DNA"/>
</dbReference>
<dbReference type="RefSeq" id="WP_012378383.1">
    <property type="nucleotide sequence ID" value="NC_010572.1"/>
</dbReference>
<dbReference type="SMR" id="B1VV57"/>
<dbReference type="KEGG" id="sgr:SGR_1212"/>
<dbReference type="PATRIC" id="fig|455632.4.peg.1213"/>
<dbReference type="eggNOG" id="COG0620">
    <property type="taxonomic scope" value="Bacteria"/>
</dbReference>
<dbReference type="HOGENOM" id="CLU_013175_0_0_11"/>
<dbReference type="UniPathway" id="UPA00051">
    <property type="reaction ID" value="UER00082"/>
</dbReference>
<dbReference type="Proteomes" id="UP000001685">
    <property type="component" value="Chromosome"/>
</dbReference>
<dbReference type="GO" id="GO:0003871">
    <property type="term" value="F:5-methyltetrahydropteroyltriglutamate-homocysteine S-methyltransferase activity"/>
    <property type="evidence" value="ECO:0007669"/>
    <property type="project" value="UniProtKB-UniRule"/>
</dbReference>
<dbReference type="GO" id="GO:0008270">
    <property type="term" value="F:zinc ion binding"/>
    <property type="evidence" value="ECO:0007669"/>
    <property type="project" value="InterPro"/>
</dbReference>
<dbReference type="GO" id="GO:0009086">
    <property type="term" value="P:methionine biosynthetic process"/>
    <property type="evidence" value="ECO:0007669"/>
    <property type="project" value="UniProtKB-UniRule"/>
</dbReference>
<dbReference type="GO" id="GO:0032259">
    <property type="term" value="P:methylation"/>
    <property type="evidence" value="ECO:0007669"/>
    <property type="project" value="UniProtKB-KW"/>
</dbReference>
<dbReference type="CDD" id="cd03311">
    <property type="entry name" value="CIMS_C_terminal_like"/>
    <property type="match status" value="1"/>
</dbReference>
<dbReference type="CDD" id="cd03312">
    <property type="entry name" value="CIMS_N_terminal_like"/>
    <property type="match status" value="1"/>
</dbReference>
<dbReference type="Gene3D" id="3.20.20.210">
    <property type="match status" value="2"/>
</dbReference>
<dbReference type="HAMAP" id="MF_00172">
    <property type="entry name" value="Meth_synth"/>
    <property type="match status" value="1"/>
</dbReference>
<dbReference type="InterPro" id="IPR013215">
    <property type="entry name" value="Cbl-indep_Met_Synth_N"/>
</dbReference>
<dbReference type="InterPro" id="IPR006276">
    <property type="entry name" value="Cobalamin-indep_Met_synthase"/>
</dbReference>
<dbReference type="InterPro" id="IPR002629">
    <property type="entry name" value="Met_Synth_C/arc"/>
</dbReference>
<dbReference type="InterPro" id="IPR038071">
    <property type="entry name" value="UROD/MetE-like_sf"/>
</dbReference>
<dbReference type="NCBIfam" id="TIGR01371">
    <property type="entry name" value="met_syn_B12ind"/>
    <property type="match status" value="1"/>
</dbReference>
<dbReference type="NCBIfam" id="NF003556">
    <property type="entry name" value="PRK05222.1"/>
    <property type="match status" value="1"/>
</dbReference>
<dbReference type="PANTHER" id="PTHR30519">
    <property type="entry name" value="5-METHYLTETRAHYDROPTEROYLTRIGLUTAMATE--HOMOCYSTEINE METHYLTRANSFERASE"/>
    <property type="match status" value="1"/>
</dbReference>
<dbReference type="Pfam" id="PF08267">
    <property type="entry name" value="Meth_synt_1"/>
    <property type="match status" value="1"/>
</dbReference>
<dbReference type="Pfam" id="PF01717">
    <property type="entry name" value="Meth_synt_2"/>
    <property type="match status" value="1"/>
</dbReference>
<dbReference type="PIRSF" id="PIRSF000382">
    <property type="entry name" value="MeTrfase_B12_ind"/>
    <property type="match status" value="1"/>
</dbReference>
<dbReference type="SUPFAM" id="SSF51726">
    <property type="entry name" value="UROD/MetE-like"/>
    <property type="match status" value="2"/>
</dbReference>
<sequence length="774" mass="83741">MTAKPAAAAARATVYGYPRQGPHRELKKAIEGYWKGRVDADALRETAAELRRGTWQQLAEAGVHEVPTGDFSYYDHVLDTSVMVGAVPERHRASVEADALDGYFAMARGTQDVAPLEMTKWFDTNYHYLVPELGPDTVFSADSAKQVAEFREALALGWTPRPVLVGPLTYLLLAKAAPGVAADFEPLTLLDRLLPVYAEILADLRAAGATWVQLDEPALVQDRTPAELNAAARAYRELGGRADRPQLLVASYFGRLGEALAVLAKAPVDGLALDFTESGAGNLDDLAAAGGLPGKRLVAGVVNGRNIWINDYAKSLATLGTLLGLADRVDVSASCSLLHVPLDADAERGIDPETARWLAFAKQKTEEIVVLARGLGSGTDAIASELAANRADLASRTGAALTRDPAVRARTAAVTEADGRRSQPYAERSAAQRAGLGLPLLPTTTIGSFPQTTELRTARAELRAGRIDEAEYEERVKDEIREVLSFQEKAGIDVLVHGEPERNDMVQYFAEQLDGYLATQHGWVQSYGTRYVRPPVLAGDISRPEPMTVRWTTYAQSLTARPVKGMLTGPVTMLAWSFVRDDQPLGDTARQVALALRDEVNDLEANGTSVIQVDEPALRETLPLRAAEHAAYLEWATESFRIATSGVRPDTQIHTHMCYAEFGDIVQAIDDLDADVISLEAARSHMQVARELAAHGYPREAGPGVYDIHSPRIPGAEEAAALLRKGLEAIPAERLWVNPDCGLKTRGWPETRASLENLVAAARQIRAELPTGAA</sequence>
<gene>
    <name evidence="1" type="primary">metE</name>
    <name type="ordered locus">SGR_1212</name>
</gene>
<protein>
    <recommendedName>
        <fullName evidence="1">5-methyltetrahydropteroyltriglutamate--homocysteine methyltransferase</fullName>
        <ecNumber evidence="1">2.1.1.14</ecNumber>
    </recommendedName>
    <alternativeName>
        <fullName evidence="1">Cobalamin-independent methionine synthase</fullName>
    </alternativeName>
    <alternativeName>
        <fullName evidence="1">Methionine synthase, vitamin-B12 independent isozyme</fullName>
    </alternativeName>
</protein>